<accession>Q4ULQ8</accession>
<feature type="chain" id="PRO_0000286489" description="Succinate--CoA ligase [ADP-forming] subunit alpha">
    <location>
        <begin position="1"/>
        <end position="292"/>
    </location>
</feature>
<feature type="active site" description="Tele-phosphohistidine intermediate" evidence="1">
    <location>
        <position position="248"/>
    </location>
</feature>
<feature type="binding site" evidence="1">
    <location>
        <begin position="17"/>
        <end position="20"/>
    </location>
    <ligand>
        <name>CoA</name>
        <dbReference type="ChEBI" id="CHEBI:57287"/>
    </ligand>
</feature>
<feature type="binding site" evidence="1">
    <location>
        <position position="43"/>
    </location>
    <ligand>
        <name>CoA</name>
        <dbReference type="ChEBI" id="CHEBI:57287"/>
    </ligand>
</feature>
<feature type="binding site" evidence="1">
    <location>
        <begin position="96"/>
        <end position="98"/>
    </location>
    <ligand>
        <name>CoA</name>
        <dbReference type="ChEBI" id="CHEBI:57287"/>
    </ligand>
</feature>
<feature type="binding site" evidence="1">
    <location>
        <position position="159"/>
    </location>
    <ligand>
        <name>substrate</name>
        <note>ligand shared with subunit beta</note>
    </ligand>
</feature>
<gene>
    <name evidence="1" type="primary">sucD</name>
    <name type="ordered locus">RF_0664</name>
</gene>
<reference key="1">
    <citation type="journal article" date="2005" name="PLoS Biol.">
        <title>The genome sequence of Rickettsia felis identifies the first putative conjugative plasmid in an obligate intracellular parasite.</title>
        <authorList>
            <person name="Ogata H."/>
            <person name="Renesto P."/>
            <person name="Audic S."/>
            <person name="Robert C."/>
            <person name="Blanc G."/>
            <person name="Fournier P.-E."/>
            <person name="Parinello H."/>
            <person name="Claverie J.-M."/>
            <person name="Raoult D."/>
        </authorList>
    </citation>
    <scope>NUCLEOTIDE SEQUENCE [LARGE SCALE GENOMIC DNA]</scope>
    <source>
        <strain>ATCC VR-1525 / URRWXCal2</strain>
    </source>
</reference>
<evidence type="ECO:0000255" key="1">
    <source>
        <dbReference type="HAMAP-Rule" id="MF_01988"/>
    </source>
</evidence>
<organism>
    <name type="scientific">Rickettsia felis (strain ATCC VR-1525 / URRWXCal2)</name>
    <name type="common">Rickettsia azadi</name>
    <dbReference type="NCBI Taxonomy" id="315456"/>
    <lineage>
        <taxon>Bacteria</taxon>
        <taxon>Pseudomonadati</taxon>
        <taxon>Pseudomonadota</taxon>
        <taxon>Alphaproteobacteria</taxon>
        <taxon>Rickettsiales</taxon>
        <taxon>Rickettsiaceae</taxon>
        <taxon>Rickettsieae</taxon>
        <taxon>Rickettsia</taxon>
        <taxon>spotted fever group</taxon>
    </lineage>
</organism>
<sequence length="292" mass="30165">MAILINKKTKVICQGFTGSQGTFHSEQAIAYGTNMVGGVTPGKGGHTHLDLPVYNTVHEAKAKTGANASVIYVPPGFAADSILEAIDAEIEVVVCITEGIPVLDMVKVKRALVGSKTRLIGPNCPGVITPGECKIGIMPGHIHKRGTIGIVSRSGTLTYEAVAQTTAVGLGQSTCVGIGGDPVNGTNFVDCIDMFLKDDETKAIIMIGEIGGNAEEDAAEFIKQSKIKKPIVSFIAGITAPPGKRMGHAGAIIAGGKGSAEDKLEALQSAGVTITRSPADIGKTMFDLLNKG</sequence>
<proteinExistence type="inferred from homology"/>
<dbReference type="EC" id="6.2.1.5" evidence="1"/>
<dbReference type="EMBL" id="CP000053">
    <property type="protein sequence ID" value="AAY61515.1"/>
    <property type="molecule type" value="Genomic_DNA"/>
</dbReference>
<dbReference type="SMR" id="Q4ULQ8"/>
<dbReference type="STRING" id="315456.RF_0664"/>
<dbReference type="KEGG" id="rfe:RF_0664"/>
<dbReference type="eggNOG" id="COG0074">
    <property type="taxonomic scope" value="Bacteria"/>
</dbReference>
<dbReference type="HOGENOM" id="CLU_052104_0_0_5"/>
<dbReference type="OrthoDB" id="9807196at2"/>
<dbReference type="UniPathway" id="UPA00223">
    <property type="reaction ID" value="UER00999"/>
</dbReference>
<dbReference type="Proteomes" id="UP000008548">
    <property type="component" value="Chromosome"/>
</dbReference>
<dbReference type="GO" id="GO:0009361">
    <property type="term" value="C:succinate-CoA ligase complex (ADP-forming)"/>
    <property type="evidence" value="ECO:0007669"/>
    <property type="project" value="TreeGrafter"/>
</dbReference>
<dbReference type="GO" id="GO:0000166">
    <property type="term" value="F:nucleotide binding"/>
    <property type="evidence" value="ECO:0007669"/>
    <property type="project" value="UniProtKB-KW"/>
</dbReference>
<dbReference type="GO" id="GO:0004775">
    <property type="term" value="F:succinate-CoA ligase (ADP-forming) activity"/>
    <property type="evidence" value="ECO:0007669"/>
    <property type="project" value="UniProtKB-UniRule"/>
</dbReference>
<dbReference type="GO" id="GO:0004776">
    <property type="term" value="F:succinate-CoA ligase (GDP-forming) activity"/>
    <property type="evidence" value="ECO:0007669"/>
    <property type="project" value="TreeGrafter"/>
</dbReference>
<dbReference type="GO" id="GO:0006099">
    <property type="term" value="P:tricarboxylic acid cycle"/>
    <property type="evidence" value="ECO:0007669"/>
    <property type="project" value="UniProtKB-UniRule"/>
</dbReference>
<dbReference type="FunFam" id="3.40.50.720:FF:000002">
    <property type="entry name" value="Succinate--CoA ligase [ADP-forming] subunit alpha"/>
    <property type="match status" value="1"/>
</dbReference>
<dbReference type="FunFam" id="3.40.50.261:FF:000005">
    <property type="entry name" value="Succinate--CoA ligase [ADP-forming] subunit alpha, mitochondrial"/>
    <property type="match status" value="1"/>
</dbReference>
<dbReference type="Gene3D" id="3.40.50.720">
    <property type="entry name" value="NAD(P)-binding Rossmann-like Domain"/>
    <property type="match status" value="1"/>
</dbReference>
<dbReference type="Gene3D" id="3.40.50.261">
    <property type="entry name" value="Succinyl-CoA synthetase domains"/>
    <property type="match status" value="1"/>
</dbReference>
<dbReference type="HAMAP" id="MF_01988">
    <property type="entry name" value="Succ_CoA_alpha"/>
    <property type="match status" value="1"/>
</dbReference>
<dbReference type="InterPro" id="IPR017440">
    <property type="entry name" value="Cit_synth/succinyl-CoA_lig_AS"/>
</dbReference>
<dbReference type="InterPro" id="IPR033847">
    <property type="entry name" value="Citrt_syn/SCS-alpha_CS"/>
</dbReference>
<dbReference type="InterPro" id="IPR003781">
    <property type="entry name" value="CoA-bd"/>
</dbReference>
<dbReference type="InterPro" id="IPR005810">
    <property type="entry name" value="CoA_lig_alpha"/>
</dbReference>
<dbReference type="InterPro" id="IPR036291">
    <property type="entry name" value="NAD(P)-bd_dom_sf"/>
</dbReference>
<dbReference type="InterPro" id="IPR005811">
    <property type="entry name" value="SUCC_ACL_C"/>
</dbReference>
<dbReference type="InterPro" id="IPR016102">
    <property type="entry name" value="Succinyl-CoA_synth-like"/>
</dbReference>
<dbReference type="NCBIfam" id="NF004230">
    <property type="entry name" value="PRK05678.1"/>
    <property type="match status" value="1"/>
</dbReference>
<dbReference type="NCBIfam" id="TIGR01019">
    <property type="entry name" value="sucCoAalpha"/>
    <property type="match status" value="1"/>
</dbReference>
<dbReference type="PANTHER" id="PTHR11117:SF2">
    <property type="entry name" value="SUCCINATE--COA LIGASE [ADP_GDP-FORMING] SUBUNIT ALPHA, MITOCHONDRIAL"/>
    <property type="match status" value="1"/>
</dbReference>
<dbReference type="PANTHER" id="PTHR11117">
    <property type="entry name" value="SUCCINYL-COA LIGASE SUBUNIT ALPHA"/>
    <property type="match status" value="1"/>
</dbReference>
<dbReference type="Pfam" id="PF02629">
    <property type="entry name" value="CoA_binding"/>
    <property type="match status" value="1"/>
</dbReference>
<dbReference type="Pfam" id="PF00549">
    <property type="entry name" value="Ligase_CoA"/>
    <property type="match status" value="1"/>
</dbReference>
<dbReference type="PIRSF" id="PIRSF001553">
    <property type="entry name" value="SucCS_alpha"/>
    <property type="match status" value="1"/>
</dbReference>
<dbReference type="PRINTS" id="PR01798">
    <property type="entry name" value="SCOASYNTHASE"/>
</dbReference>
<dbReference type="SMART" id="SM00881">
    <property type="entry name" value="CoA_binding"/>
    <property type="match status" value="1"/>
</dbReference>
<dbReference type="SUPFAM" id="SSF51735">
    <property type="entry name" value="NAD(P)-binding Rossmann-fold domains"/>
    <property type="match status" value="1"/>
</dbReference>
<dbReference type="SUPFAM" id="SSF52210">
    <property type="entry name" value="Succinyl-CoA synthetase domains"/>
    <property type="match status" value="1"/>
</dbReference>
<dbReference type="PROSITE" id="PS01216">
    <property type="entry name" value="SUCCINYL_COA_LIG_1"/>
    <property type="match status" value="1"/>
</dbReference>
<dbReference type="PROSITE" id="PS00399">
    <property type="entry name" value="SUCCINYL_COA_LIG_2"/>
    <property type="match status" value="1"/>
</dbReference>
<comment type="function">
    <text evidence="1">Succinyl-CoA synthetase functions in the citric acid cycle (TCA), coupling the hydrolysis of succinyl-CoA to the synthesis of either ATP or GTP and thus represents the only step of substrate-level phosphorylation in the TCA. The alpha subunit of the enzyme binds the substrates coenzyme A and phosphate, while succinate binding and nucleotide specificity is provided by the beta subunit.</text>
</comment>
<comment type="catalytic activity">
    <reaction evidence="1">
        <text>succinate + ATP + CoA = succinyl-CoA + ADP + phosphate</text>
        <dbReference type="Rhea" id="RHEA:17661"/>
        <dbReference type="ChEBI" id="CHEBI:30031"/>
        <dbReference type="ChEBI" id="CHEBI:30616"/>
        <dbReference type="ChEBI" id="CHEBI:43474"/>
        <dbReference type="ChEBI" id="CHEBI:57287"/>
        <dbReference type="ChEBI" id="CHEBI:57292"/>
        <dbReference type="ChEBI" id="CHEBI:456216"/>
        <dbReference type="EC" id="6.2.1.5"/>
    </reaction>
    <physiologicalReaction direction="right-to-left" evidence="1">
        <dbReference type="Rhea" id="RHEA:17663"/>
    </physiologicalReaction>
</comment>
<comment type="catalytic activity">
    <reaction evidence="1">
        <text>GTP + succinate + CoA = succinyl-CoA + GDP + phosphate</text>
        <dbReference type="Rhea" id="RHEA:22120"/>
        <dbReference type="ChEBI" id="CHEBI:30031"/>
        <dbReference type="ChEBI" id="CHEBI:37565"/>
        <dbReference type="ChEBI" id="CHEBI:43474"/>
        <dbReference type="ChEBI" id="CHEBI:57287"/>
        <dbReference type="ChEBI" id="CHEBI:57292"/>
        <dbReference type="ChEBI" id="CHEBI:58189"/>
    </reaction>
    <physiologicalReaction direction="right-to-left" evidence="1">
        <dbReference type="Rhea" id="RHEA:22122"/>
    </physiologicalReaction>
</comment>
<comment type="pathway">
    <text evidence="1">Carbohydrate metabolism; tricarboxylic acid cycle; succinate from succinyl-CoA (ligase route): step 1/1.</text>
</comment>
<comment type="subunit">
    <text evidence="1">Heterotetramer of two alpha and two beta subunits.</text>
</comment>
<comment type="similarity">
    <text evidence="1">Belongs to the succinate/malate CoA ligase alpha subunit family.</text>
</comment>
<keyword id="KW-0436">Ligase</keyword>
<keyword id="KW-0547">Nucleotide-binding</keyword>
<keyword id="KW-0816">Tricarboxylic acid cycle</keyword>
<name>SUCD_RICFE</name>
<protein>
    <recommendedName>
        <fullName evidence="1">Succinate--CoA ligase [ADP-forming] subunit alpha</fullName>
        <ecNumber evidence="1">6.2.1.5</ecNumber>
    </recommendedName>
    <alternativeName>
        <fullName evidence="1">Succinyl-CoA synthetase subunit alpha</fullName>
        <shortName evidence="1">SCS-alpha</shortName>
    </alternativeName>
</protein>